<keyword id="KW-0066">ATP synthesis</keyword>
<keyword id="KW-0067">ATP-binding</keyword>
<keyword id="KW-0139">CF(1)</keyword>
<keyword id="KW-0150">Chloroplast</keyword>
<keyword id="KW-0375">Hydrogen ion transport</keyword>
<keyword id="KW-0406">Ion transport</keyword>
<keyword id="KW-0472">Membrane</keyword>
<keyword id="KW-0547">Nucleotide-binding</keyword>
<keyword id="KW-0934">Plastid</keyword>
<keyword id="KW-0793">Thylakoid</keyword>
<keyword id="KW-1278">Translocase</keyword>
<keyword id="KW-0813">Transport</keyword>
<feature type="chain" id="PRO_0000254464" description="ATP synthase subunit beta, chloroplastic">
    <location>
        <begin position="1"/>
        <end position="490"/>
    </location>
</feature>
<feature type="binding site" evidence="1">
    <location>
        <begin position="170"/>
        <end position="177"/>
    </location>
    <ligand>
        <name>ATP</name>
        <dbReference type="ChEBI" id="CHEBI:30616"/>
    </ligand>
</feature>
<gene>
    <name evidence="1" type="primary">atpB</name>
</gene>
<accession>Q8MBK3</accession>
<proteinExistence type="inferred from homology"/>
<comment type="function">
    <text evidence="1">Produces ATP from ADP in the presence of a proton gradient across the membrane. The catalytic sites are hosted primarily by the beta subunits.</text>
</comment>
<comment type="catalytic activity">
    <reaction evidence="1">
        <text>ATP + H2O + 4 H(+)(in) = ADP + phosphate + 5 H(+)(out)</text>
        <dbReference type="Rhea" id="RHEA:57720"/>
        <dbReference type="ChEBI" id="CHEBI:15377"/>
        <dbReference type="ChEBI" id="CHEBI:15378"/>
        <dbReference type="ChEBI" id="CHEBI:30616"/>
        <dbReference type="ChEBI" id="CHEBI:43474"/>
        <dbReference type="ChEBI" id="CHEBI:456216"/>
        <dbReference type="EC" id="7.1.2.2"/>
    </reaction>
</comment>
<comment type="subunit">
    <text evidence="1">F-type ATPases have 2 components, CF(1) - the catalytic core - and CF(0) - the membrane proton channel. CF(1) has five subunits: alpha(3), beta(3), gamma(1), delta(1), epsilon(1). CF(0) has four main subunits: a(1), b(1), b'(1) and c(9-12).</text>
</comment>
<comment type="subcellular location">
    <subcellularLocation>
        <location evidence="1">Plastid</location>
        <location evidence="1">Chloroplast thylakoid membrane</location>
        <topology evidence="1">Peripheral membrane protein</topology>
    </subcellularLocation>
</comment>
<comment type="similarity">
    <text evidence="1">Belongs to the ATPase alpha/beta chains family.</text>
</comment>
<sequence>MRSNPTXSGSEVSAVEKKNLGRIVQIIGPVLDVAFPPGKMPYIYNALVVQGRDNEQMNVTCEVQQILGNNRVRAVAMSDTDGLMRGMEVIDTGVSISVPVGGATLGRIFNVLGEPVDKLGPVDTKTTSPIHRSAPAFIQLDTKLSIFETGIKVVDLLAPYRRGGKIGLFGGAGVGKTVLIMELINNIAKAHGGVSVFGGVGERTREGNDLYMEMKESGVINEENIAESKVALVYGQMNEPPGARMRVGLTALTMAEYFRDVNEQDVLLFIDNIFRFVQAGSEVSALLGRMPSAVGYQPTLSTEMGTLQERITSTKEGSITSIQAVYVPADDLTDPAPATTFAHLDATTVLSRGLAAKGIYPAVDPLDSTSTMLQPRIVGEEHYETAQRVKETLQRYKELQDIIAILGLDELSEEDRLTVARARKIERFLSQPFFVAEVFTGSPGKYVGLAETIRGFQLILSGELDGLPEQAFYLVGNIDEATAKAMNLKT</sequence>
<reference key="1">
    <citation type="journal article" date="2002" name="Am. J. Bot.">
        <title>Monophyly of the Convolvulaceae and circumscription of their major lineages based on DNA sequences of multiple chloroplast loci.</title>
        <authorList>
            <person name="Stefanovic S."/>
            <person name="Krueger L."/>
            <person name="Olmstead R.G."/>
        </authorList>
        <dbReference type="AGRICOLA" id="IND23320510"/>
    </citation>
    <scope>NUCLEOTIDE SEQUENCE [GENOMIC DNA]</scope>
</reference>
<name>ATPB_CRETR</name>
<dbReference type="EC" id="7.1.2.2" evidence="1"/>
<dbReference type="EMBL" id="AY100806">
    <property type="protein sequence ID" value="AAM52160.1"/>
    <property type="molecule type" value="Genomic_DNA"/>
</dbReference>
<dbReference type="GO" id="GO:0009535">
    <property type="term" value="C:chloroplast thylakoid membrane"/>
    <property type="evidence" value="ECO:0007669"/>
    <property type="project" value="UniProtKB-SubCell"/>
</dbReference>
<dbReference type="GO" id="GO:0005739">
    <property type="term" value="C:mitochondrion"/>
    <property type="evidence" value="ECO:0007669"/>
    <property type="project" value="GOC"/>
</dbReference>
<dbReference type="GO" id="GO:0045259">
    <property type="term" value="C:proton-transporting ATP synthase complex"/>
    <property type="evidence" value="ECO:0007669"/>
    <property type="project" value="UniProtKB-KW"/>
</dbReference>
<dbReference type="GO" id="GO:0005524">
    <property type="term" value="F:ATP binding"/>
    <property type="evidence" value="ECO:0007669"/>
    <property type="project" value="UniProtKB-UniRule"/>
</dbReference>
<dbReference type="GO" id="GO:0016887">
    <property type="term" value="F:ATP hydrolysis activity"/>
    <property type="evidence" value="ECO:0007669"/>
    <property type="project" value="InterPro"/>
</dbReference>
<dbReference type="GO" id="GO:0046933">
    <property type="term" value="F:proton-transporting ATP synthase activity, rotational mechanism"/>
    <property type="evidence" value="ECO:0007669"/>
    <property type="project" value="UniProtKB-UniRule"/>
</dbReference>
<dbReference type="GO" id="GO:0042776">
    <property type="term" value="P:proton motive force-driven mitochondrial ATP synthesis"/>
    <property type="evidence" value="ECO:0007669"/>
    <property type="project" value="TreeGrafter"/>
</dbReference>
<dbReference type="CDD" id="cd18110">
    <property type="entry name" value="ATP-synt_F1_beta_C"/>
    <property type="match status" value="1"/>
</dbReference>
<dbReference type="CDD" id="cd18115">
    <property type="entry name" value="ATP-synt_F1_beta_N"/>
    <property type="match status" value="1"/>
</dbReference>
<dbReference type="CDD" id="cd01133">
    <property type="entry name" value="F1-ATPase_beta_CD"/>
    <property type="match status" value="1"/>
</dbReference>
<dbReference type="FunFam" id="1.10.1140.10:FF:000001">
    <property type="entry name" value="ATP synthase subunit beta"/>
    <property type="match status" value="1"/>
</dbReference>
<dbReference type="FunFam" id="3.40.50.12240:FF:000006">
    <property type="entry name" value="ATP synthase subunit beta"/>
    <property type="match status" value="1"/>
</dbReference>
<dbReference type="FunFam" id="3.40.50.300:FF:000026">
    <property type="entry name" value="ATP synthase subunit beta"/>
    <property type="match status" value="1"/>
</dbReference>
<dbReference type="FunFam" id="2.40.10.170:FF:000002">
    <property type="entry name" value="ATP synthase subunit beta, chloroplastic"/>
    <property type="match status" value="1"/>
</dbReference>
<dbReference type="Gene3D" id="2.40.10.170">
    <property type="match status" value="1"/>
</dbReference>
<dbReference type="Gene3D" id="1.10.1140.10">
    <property type="entry name" value="Bovine Mitochondrial F1-atpase, Atp Synthase Beta Chain, Chain D, domain 3"/>
    <property type="match status" value="1"/>
</dbReference>
<dbReference type="Gene3D" id="3.40.50.300">
    <property type="entry name" value="P-loop containing nucleotide triphosphate hydrolases"/>
    <property type="match status" value="1"/>
</dbReference>
<dbReference type="HAMAP" id="MF_01347">
    <property type="entry name" value="ATP_synth_beta_bact"/>
    <property type="match status" value="1"/>
</dbReference>
<dbReference type="InterPro" id="IPR003593">
    <property type="entry name" value="AAA+_ATPase"/>
</dbReference>
<dbReference type="InterPro" id="IPR055190">
    <property type="entry name" value="ATP-synt_VA_C"/>
</dbReference>
<dbReference type="InterPro" id="IPR005722">
    <property type="entry name" value="ATP_synth_F1_bsu"/>
</dbReference>
<dbReference type="InterPro" id="IPR020003">
    <property type="entry name" value="ATPase_a/bsu_AS"/>
</dbReference>
<dbReference type="InterPro" id="IPR050053">
    <property type="entry name" value="ATPase_alpha/beta_chains"/>
</dbReference>
<dbReference type="InterPro" id="IPR004100">
    <property type="entry name" value="ATPase_F1/V1/A1_a/bsu_N"/>
</dbReference>
<dbReference type="InterPro" id="IPR036121">
    <property type="entry name" value="ATPase_F1/V1/A1_a/bsu_N_sf"/>
</dbReference>
<dbReference type="InterPro" id="IPR000194">
    <property type="entry name" value="ATPase_F1/V1/A1_a/bsu_nucl-bd"/>
</dbReference>
<dbReference type="InterPro" id="IPR024034">
    <property type="entry name" value="ATPase_F1/V1_b/a_C"/>
</dbReference>
<dbReference type="InterPro" id="IPR027417">
    <property type="entry name" value="P-loop_NTPase"/>
</dbReference>
<dbReference type="NCBIfam" id="TIGR01039">
    <property type="entry name" value="atpD"/>
    <property type="match status" value="1"/>
</dbReference>
<dbReference type="PANTHER" id="PTHR15184">
    <property type="entry name" value="ATP SYNTHASE"/>
    <property type="match status" value="1"/>
</dbReference>
<dbReference type="PANTHER" id="PTHR15184:SF71">
    <property type="entry name" value="ATP SYNTHASE SUBUNIT BETA, MITOCHONDRIAL"/>
    <property type="match status" value="1"/>
</dbReference>
<dbReference type="Pfam" id="PF00006">
    <property type="entry name" value="ATP-synt_ab"/>
    <property type="match status" value="1"/>
</dbReference>
<dbReference type="Pfam" id="PF02874">
    <property type="entry name" value="ATP-synt_ab_N"/>
    <property type="match status" value="1"/>
</dbReference>
<dbReference type="Pfam" id="PF22919">
    <property type="entry name" value="ATP-synt_VA_C"/>
    <property type="match status" value="1"/>
</dbReference>
<dbReference type="SMART" id="SM00382">
    <property type="entry name" value="AAA"/>
    <property type="match status" value="1"/>
</dbReference>
<dbReference type="SUPFAM" id="SSF47917">
    <property type="entry name" value="C-terminal domain of alpha and beta subunits of F1 ATP synthase"/>
    <property type="match status" value="1"/>
</dbReference>
<dbReference type="SUPFAM" id="SSF50615">
    <property type="entry name" value="N-terminal domain of alpha and beta subunits of F1 ATP synthase"/>
    <property type="match status" value="1"/>
</dbReference>
<dbReference type="SUPFAM" id="SSF52540">
    <property type="entry name" value="P-loop containing nucleoside triphosphate hydrolases"/>
    <property type="match status" value="1"/>
</dbReference>
<dbReference type="PROSITE" id="PS00152">
    <property type="entry name" value="ATPASE_ALPHA_BETA"/>
    <property type="match status" value="1"/>
</dbReference>
<organism>
    <name type="scientific">Cressa truxillensis</name>
    <name type="common">Spreading alkaliweed</name>
    <name type="synonym">Cressa cretica var. truxillensis</name>
    <dbReference type="NCBI Taxonomy" id="197373"/>
    <lineage>
        <taxon>Eukaryota</taxon>
        <taxon>Viridiplantae</taxon>
        <taxon>Streptophyta</taxon>
        <taxon>Embryophyta</taxon>
        <taxon>Tracheophyta</taxon>
        <taxon>Spermatophyta</taxon>
        <taxon>Magnoliopsida</taxon>
        <taxon>eudicotyledons</taxon>
        <taxon>Gunneridae</taxon>
        <taxon>Pentapetalae</taxon>
        <taxon>asterids</taxon>
        <taxon>lamiids</taxon>
        <taxon>Solanales</taxon>
        <taxon>Convolvulaceae</taxon>
        <taxon>Cresseae</taxon>
        <taxon>Cressa</taxon>
    </lineage>
</organism>
<evidence type="ECO:0000255" key="1">
    <source>
        <dbReference type="HAMAP-Rule" id="MF_01347"/>
    </source>
</evidence>
<geneLocation type="chloroplast"/>
<protein>
    <recommendedName>
        <fullName evidence="1">ATP synthase subunit beta, chloroplastic</fullName>
        <ecNumber evidence="1">7.1.2.2</ecNumber>
    </recommendedName>
    <alternativeName>
        <fullName evidence="1">ATP synthase F1 sector subunit beta</fullName>
    </alternativeName>
    <alternativeName>
        <fullName evidence="1">F-ATPase subunit beta</fullName>
    </alternativeName>
</protein>